<dbReference type="EMBL" id="AF242881">
    <property type="protein sequence ID" value="AAB95098.1"/>
    <property type="molecule type" value="Genomic_DNA"/>
</dbReference>
<dbReference type="RefSeq" id="NP_059756.1">
    <property type="nucleotide sequence ID" value="NC_002377.1"/>
</dbReference>
<dbReference type="RefSeq" id="WP_010892444.1">
    <property type="nucleotide sequence ID" value="NZ_QSNU01000012.1"/>
</dbReference>
<dbReference type="SMR" id="P54911"/>
<dbReference type="eggNOG" id="COG5314">
    <property type="taxonomic scope" value="Bacteria"/>
</dbReference>
<dbReference type="OrthoDB" id="8217233at2"/>
<dbReference type="InterPro" id="IPR014147">
    <property type="entry name" value="T4SS_TrbJ"/>
</dbReference>
<dbReference type="NCBIfam" id="NF010416">
    <property type="entry name" value="PRK13842.1"/>
    <property type="match status" value="1"/>
</dbReference>
<dbReference type="NCBIfam" id="TIGR02780">
    <property type="entry name" value="TrbJ_Ti"/>
    <property type="match status" value="1"/>
</dbReference>
<dbReference type="SUPFAM" id="SSF101082">
    <property type="entry name" value="Typo IV secretion system protein TraC"/>
    <property type="match status" value="1"/>
</dbReference>
<feature type="signal peptide" evidence="1">
    <location>
        <begin position="1"/>
        <end position="32"/>
    </location>
</feature>
<feature type="chain" id="PRO_0000022586" description="Conjugal transfer protein TrbJ">
    <location>
        <begin position="33"/>
        <end position="269"/>
    </location>
</feature>
<keyword id="KW-0184">Conjugation</keyword>
<keyword id="KW-0614">Plasmid</keyword>
<keyword id="KW-0732">Signal</keyword>
<organism>
    <name type="scientific">Rhizobium radiobacter</name>
    <name type="common">Agrobacterium tumefaciens</name>
    <name type="synonym">Agrobacterium radiobacter</name>
    <dbReference type="NCBI Taxonomy" id="358"/>
    <lineage>
        <taxon>Bacteria</taxon>
        <taxon>Pseudomonadati</taxon>
        <taxon>Pseudomonadota</taxon>
        <taxon>Alphaproteobacteria</taxon>
        <taxon>Hyphomicrobiales</taxon>
        <taxon>Rhizobiaceae</taxon>
        <taxon>Rhizobium/Agrobacterium group</taxon>
        <taxon>Agrobacterium</taxon>
        <taxon>Agrobacterium tumefaciens complex</taxon>
    </lineage>
</organism>
<accession>P54911</accession>
<proteinExistence type="inferred from homology"/>
<gene>
    <name type="primary">trbJ</name>
</gene>
<reference key="1">
    <citation type="journal article" date="1996" name="J. Bacteriol.">
        <title>The conjugal transfer system of Agrobacterium tumefaciens octopine-type Ti plasmids is closely related to the transfer system of an IncP plasmid and distantly related to Ti plasmid vir genes.</title>
        <authorList>
            <person name="Alt-Morbe J."/>
            <person name="Stryker J.L."/>
            <person name="Fuqua C."/>
            <person name="Li P.L."/>
            <person name="Farrand S.K."/>
            <person name="Winans S.C."/>
        </authorList>
    </citation>
    <scope>NUCLEOTIDE SEQUENCE [GENOMIC DNA]</scope>
</reference>
<reference key="2">
    <citation type="submission" date="1998-01" db="EMBL/GenBank/DDBJ databases">
        <authorList>
            <person name="Winans S.C."/>
        </authorList>
    </citation>
    <scope>SEQUENCE REVISION TO C-TERMINUS</scope>
</reference>
<sequence length="269" mass="29770">MPIHSSRPTRLARHAMIAAILLSSTSPMPAVAGGVTGQATEWTQLANNTELISLVGKSAEQVNNQITQISQLAEQIQNQLNIYRNMLQNTAQLPNHIWGQVENDLKNLQNVVNEGQGVAFSMGNVEDVMKQRFQSFAEMKSNLPDGASFSTTYQNWSGTNRDTIAGTLKAANLTSEQFSSEESTMSSLRSMSESSDGQMKALQVGHQIAAQQVAQMQKLRGLVSQQMTMMGTWYQSEQAQKDLAQARREQFFSGTEHDIRGGQTMEPRW</sequence>
<name>TRBJ_RHIRD</name>
<protein>
    <recommendedName>
        <fullName>Conjugal transfer protein TrbJ</fullName>
    </recommendedName>
</protein>
<geneLocation type="plasmid">
    <name>pTiA6NC</name>
</geneLocation>
<evidence type="ECO:0000255" key="1"/>